<comment type="function">
    <text evidence="1 3">Activates transcription from class II MHC promoters. Activation requires the activity of the MHC class II transactivator/CIITA. May regulate other genes in the cell. RFX binds the X1 box of MHC-II promoters (By similarity). May also potentiate the activation of RAF1 (PubMed:10329666).</text>
</comment>
<comment type="subunit">
    <text evidence="1 3">Forms homodimers (PubMed:10329666). The RFX heterotetrameric complex consists of 2 molecules of RFX5 and one each of RFXAP and RFX-B/RFXANK; with each subunit representing a separate complementation group. Interacts (via ankyrin repeats) with RFX5 (via PxLPxI/L motif); the interaction is direct. RFX forms cooperative DNA binding complexes with X2BP and CBF/NF-Y. RFX associates with CIITA to form an active transcriptional complex (By similarity). Interacts with RAF1 (PubMed:10329666). Interacts with RFX7 (By similarity).</text>
</comment>
<comment type="subcellular location">
    <subcellularLocation>
        <location evidence="3">Cytoplasm</location>
    </subcellularLocation>
    <subcellularLocation>
        <location evidence="3">Nucleus</location>
    </subcellularLocation>
</comment>
<comment type="alternative products">
    <event type="alternative splicing"/>
    <isoform>
        <id>Q9Z205-1</id>
        <name>Long</name>
        <sequence type="displayed"/>
    </isoform>
    <isoform>
        <id>Q9Z205-2</id>
        <name>Short</name>
        <sequence type="described" ref="VSP_000285"/>
    </isoform>
</comment>
<comment type="tissue specificity">
    <text>Expressed primarily in thymus, lung and testis.</text>
</comment>
<comment type="domain">
    <text evidence="1 3">Interacts with RAF-1 via its C-terminal ankyrin repeat domain. The same domain also mediates its homodimerization (PubMed:10329666). The third ankyrin repeat is required for association with the two other RFX subunits; RFX5 and RFXAP. The three central ANK repeats mediate binding to the PxLPxI/L motif of RFX5 (By similarity).</text>
</comment>
<comment type="PTM">
    <text evidence="3">Phosphorylated by RAF1.</text>
</comment>
<name>RFXK_MOUSE</name>
<proteinExistence type="evidence at protein level"/>
<accession>Q9Z205</accession>
<evidence type="ECO:0000250" key="1">
    <source>
        <dbReference type="UniProtKB" id="O14593"/>
    </source>
</evidence>
<evidence type="ECO:0000256" key="2">
    <source>
        <dbReference type="SAM" id="MobiDB-lite"/>
    </source>
</evidence>
<evidence type="ECO:0000269" key="3">
    <source>
    </source>
</evidence>
<evidence type="ECO:0000303" key="4">
    <source>
    </source>
</evidence>
<gene>
    <name type="primary">Rfxank</name>
    <name type="synonym">Rfxb</name>
    <name type="synonym">Tvl1</name>
</gene>
<feature type="chain" id="PRO_0000067050" description="DNA-binding protein RFXANK">
    <location>
        <begin position="1"/>
        <end position="269"/>
    </location>
</feature>
<feature type="repeat" description="ANK 1">
    <location>
        <begin position="88"/>
        <end position="127"/>
    </location>
</feature>
<feature type="repeat" description="ANK 2">
    <location>
        <begin position="132"/>
        <end position="161"/>
    </location>
</feature>
<feature type="repeat" description="ANK 3">
    <location>
        <begin position="165"/>
        <end position="194"/>
    </location>
</feature>
<feature type="repeat" description="ANK 4">
    <location>
        <begin position="198"/>
        <end position="227"/>
    </location>
</feature>
<feature type="repeat" description="ANK 5">
    <location>
        <begin position="231"/>
        <end position="260"/>
    </location>
</feature>
<feature type="region of interest" description="Disordered" evidence="2">
    <location>
        <begin position="1"/>
        <end position="36"/>
    </location>
</feature>
<feature type="splice variant" id="VSP_000285" description="In isoform Short." evidence="4">
    <location>
        <begin position="112"/>
        <end position="121"/>
    </location>
</feature>
<sequence>MEPTQVAENLVPNQQPPVPDLEDPEDTRDESPENSDTVVLSLFPCTPDAVNPEADASASSLQGSFLKHSTTLTNRQRGNEVSALPATLDSLSIHQLAAQGELSQLKDHLRKGACPACTCLSGNNLINKPDERGFTPLIWASAFGEIETVRFLLDWGADPHILAKERESALSLASMGGYTDIVRLLLDRDVDINIYDWNGGTPLLYAVRGNHVKCVEALLARGADLTTEADSGYTPMDLAVALGYRKVQQVMESHILRLFQSTLGPVDPE</sequence>
<dbReference type="EMBL" id="AF094761">
    <property type="protein sequence ID" value="AAC69884.1"/>
    <property type="molecule type" value="mRNA"/>
</dbReference>
<dbReference type="EMBL" id="AF123704">
    <property type="protein sequence ID" value="AAD24798.1"/>
    <property type="molecule type" value="mRNA"/>
</dbReference>
<dbReference type="EMBL" id="BC010971">
    <property type="protein sequence ID" value="AAH10971.1"/>
    <property type="molecule type" value="mRNA"/>
</dbReference>
<dbReference type="CCDS" id="CCDS22360.1">
    <molecule id="Q9Z205-1"/>
</dbReference>
<dbReference type="CCDS" id="CCDS85552.1">
    <molecule id="Q9Z205-2"/>
</dbReference>
<dbReference type="RefSeq" id="NP_001020760.1">
    <molecule id="Q9Z205-2"/>
    <property type="nucleotide sequence ID" value="NM_001025589.1"/>
</dbReference>
<dbReference type="RefSeq" id="NP_035396.1">
    <molecule id="Q9Z205-1"/>
    <property type="nucleotide sequence ID" value="NM_011266.2"/>
</dbReference>
<dbReference type="SMR" id="Q9Z205"/>
<dbReference type="BioGRID" id="202875">
    <property type="interactions" value="7"/>
</dbReference>
<dbReference type="FunCoup" id="Q9Z205">
    <property type="interactions" value="2318"/>
</dbReference>
<dbReference type="IntAct" id="Q9Z205">
    <property type="interactions" value="2"/>
</dbReference>
<dbReference type="STRING" id="10090.ENSMUSP00000148739"/>
<dbReference type="PhosphoSitePlus" id="Q9Z205"/>
<dbReference type="PaxDb" id="10090-ENSMUSP00000075140"/>
<dbReference type="ProteomicsDB" id="255317">
    <molecule id="Q9Z205-1"/>
</dbReference>
<dbReference type="ProteomicsDB" id="255318">
    <molecule id="Q9Z205-2"/>
</dbReference>
<dbReference type="Antibodypedia" id="15290">
    <property type="antibodies" value="361 antibodies from 21 providers"/>
</dbReference>
<dbReference type="DNASU" id="19727"/>
<dbReference type="Ensembl" id="ENSMUST00000075724.9">
    <molecule id="Q9Z205-2"/>
    <property type="protein sequence ID" value="ENSMUSP00000075140.9"/>
    <property type="gene ID" value="ENSMUSG00000036120.11"/>
</dbReference>
<dbReference type="Ensembl" id="ENSMUST00000212320.2">
    <molecule id="Q9Z205-1"/>
    <property type="protein sequence ID" value="ENSMUSP00000148739.2"/>
    <property type="gene ID" value="ENSMUSG00000036120.11"/>
</dbReference>
<dbReference type="GeneID" id="19727"/>
<dbReference type="KEGG" id="mmu:19727"/>
<dbReference type="UCSC" id="uc009lyt.1">
    <molecule id="Q9Z205-1"/>
    <property type="organism name" value="mouse"/>
</dbReference>
<dbReference type="AGR" id="MGI:1333865"/>
<dbReference type="CTD" id="8625"/>
<dbReference type="MGI" id="MGI:1333865">
    <property type="gene designation" value="Rfxank"/>
</dbReference>
<dbReference type="VEuPathDB" id="HostDB:ENSMUSG00000036120"/>
<dbReference type="eggNOG" id="KOG0502">
    <property type="taxonomic scope" value="Eukaryota"/>
</dbReference>
<dbReference type="GeneTree" id="ENSGT00940000160753"/>
<dbReference type="HOGENOM" id="CLU_000134_23_0_1"/>
<dbReference type="InParanoid" id="Q9Z205"/>
<dbReference type="OMA" id="EQYMTAV"/>
<dbReference type="OrthoDB" id="10251692at2759"/>
<dbReference type="PhylomeDB" id="Q9Z205"/>
<dbReference type="TreeFam" id="TF333112"/>
<dbReference type="BioGRID-ORCS" id="19727">
    <property type="hits" value="5 hits in 80 CRISPR screens"/>
</dbReference>
<dbReference type="ChiTaRS" id="Rfxank">
    <property type="organism name" value="mouse"/>
</dbReference>
<dbReference type="PRO" id="PR:Q9Z205"/>
<dbReference type="Proteomes" id="UP000000589">
    <property type="component" value="Chromosome 8"/>
</dbReference>
<dbReference type="RNAct" id="Q9Z205">
    <property type="molecule type" value="protein"/>
</dbReference>
<dbReference type="Bgee" id="ENSMUSG00000036120">
    <property type="expression patterns" value="Expressed in granulocyte and 269 other cell types or tissues"/>
</dbReference>
<dbReference type="ExpressionAtlas" id="Q9Z205">
    <property type="expression patterns" value="baseline and differential"/>
</dbReference>
<dbReference type="GO" id="GO:0005737">
    <property type="term" value="C:cytoplasm"/>
    <property type="evidence" value="ECO:0000314"/>
    <property type="project" value="MGI"/>
</dbReference>
<dbReference type="GO" id="GO:0005829">
    <property type="term" value="C:cytosol"/>
    <property type="evidence" value="ECO:0007669"/>
    <property type="project" value="Ensembl"/>
</dbReference>
<dbReference type="GO" id="GO:0045171">
    <property type="term" value="C:intercellular bridge"/>
    <property type="evidence" value="ECO:0007669"/>
    <property type="project" value="Ensembl"/>
</dbReference>
<dbReference type="GO" id="GO:0005654">
    <property type="term" value="C:nucleoplasm"/>
    <property type="evidence" value="ECO:0007669"/>
    <property type="project" value="Ensembl"/>
</dbReference>
<dbReference type="GO" id="GO:0005634">
    <property type="term" value="C:nucleus"/>
    <property type="evidence" value="ECO:0000314"/>
    <property type="project" value="MGI"/>
</dbReference>
<dbReference type="GO" id="GO:0090575">
    <property type="term" value="C:RNA polymerase II transcription regulator complex"/>
    <property type="evidence" value="ECO:0007669"/>
    <property type="project" value="Ensembl"/>
</dbReference>
<dbReference type="GO" id="GO:0001228">
    <property type="term" value="F:DNA-binding transcription activator activity, RNA polymerase II-specific"/>
    <property type="evidence" value="ECO:0007669"/>
    <property type="project" value="Ensembl"/>
</dbReference>
<dbReference type="GO" id="GO:0042826">
    <property type="term" value="F:histone deacetylase binding"/>
    <property type="evidence" value="ECO:0000314"/>
    <property type="project" value="MGI"/>
</dbReference>
<dbReference type="GO" id="GO:0000977">
    <property type="term" value="F:RNA polymerase II transcription regulatory region sequence-specific DNA binding"/>
    <property type="evidence" value="ECO:0007669"/>
    <property type="project" value="Ensembl"/>
</dbReference>
<dbReference type="GO" id="GO:0045944">
    <property type="term" value="P:positive regulation of transcription by RNA polymerase II"/>
    <property type="evidence" value="ECO:0000314"/>
    <property type="project" value="MGI"/>
</dbReference>
<dbReference type="GO" id="GO:0007265">
    <property type="term" value="P:Ras protein signal transduction"/>
    <property type="evidence" value="ECO:0000353"/>
    <property type="project" value="MGI"/>
</dbReference>
<dbReference type="FunFam" id="1.25.40.20:FF:000031">
    <property type="entry name" value="Ankyrin repeat, family A (RFXANK-like), 2"/>
    <property type="match status" value="1"/>
</dbReference>
<dbReference type="Gene3D" id="1.25.40.20">
    <property type="entry name" value="Ankyrin repeat-containing domain"/>
    <property type="match status" value="1"/>
</dbReference>
<dbReference type="InterPro" id="IPR002110">
    <property type="entry name" value="Ankyrin_rpt"/>
</dbReference>
<dbReference type="InterPro" id="IPR036770">
    <property type="entry name" value="Ankyrin_rpt-contain_sf"/>
</dbReference>
<dbReference type="InterPro" id="IPR017362">
    <property type="entry name" value="DNA-bd_RFXANK"/>
</dbReference>
<dbReference type="PANTHER" id="PTHR24124">
    <property type="entry name" value="ANKYRIN REPEAT FAMILY A"/>
    <property type="match status" value="1"/>
</dbReference>
<dbReference type="PANTHER" id="PTHR24124:SF4">
    <property type="entry name" value="DNA-BINDING PROTEIN RFXANK"/>
    <property type="match status" value="1"/>
</dbReference>
<dbReference type="Pfam" id="PF00023">
    <property type="entry name" value="Ank"/>
    <property type="match status" value="1"/>
</dbReference>
<dbReference type="Pfam" id="PF12796">
    <property type="entry name" value="Ank_2"/>
    <property type="match status" value="1"/>
</dbReference>
<dbReference type="PIRSF" id="PIRSF038034">
    <property type="entry name" value="DNA-binding_RFXANK"/>
    <property type="match status" value="1"/>
</dbReference>
<dbReference type="SMART" id="SM00248">
    <property type="entry name" value="ANK"/>
    <property type="match status" value="4"/>
</dbReference>
<dbReference type="SUPFAM" id="SSF48403">
    <property type="entry name" value="Ankyrin repeat"/>
    <property type="match status" value="1"/>
</dbReference>
<dbReference type="PROSITE" id="PS50297">
    <property type="entry name" value="ANK_REP_REGION"/>
    <property type="match status" value="1"/>
</dbReference>
<dbReference type="PROSITE" id="PS50088">
    <property type="entry name" value="ANK_REPEAT"/>
    <property type="match status" value="3"/>
</dbReference>
<keyword id="KW-0010">Activator</keyword>
<keyword id="KW-0025">Alternative splicing</keyword>
<keyword id="KW-0040">ANK repeat</keyword>
<keyword id="KW-0963">Cytoplasm</keyword>
<keyword id="KW-0238">DNA-binding</keyword>
<keyword id="KW-0539">Nucleus</keyword>
<keyword id="KW-0597">Phosphoprotein</keyword>
<keyword id="KW-1185">Reference proteome</keyword>
<keyword id="KW-0677">Repeat</keyword>
<keyword id="KW-0804">Transcription</keyword>
<keyword id="KW-0805">Transcription regulation</keyword>
<organism>
    <name type="scientific">Mus musculus</name>
    <name type="common">Mouse</name>
    <dbReference type="NCBI Taxonomy" id="10090"/>
    <lineage>
        <taxon>Eukaryota</taxon>
        <taxon>Metazoa</taxon>
        <taxon>Chordata</taxon>
        <taxon>Craniata</taxon>
        <taxon>Vertebrata</taxon>
        <taxon>Euteleostomi</taxon>
        <taxon>Mammalia</taxon>
        <taxon>Eutheria</taxon>
        <taxon>Euarchontoglires</taxon>
        <taxon>Glires</taxon>
        <taxon>Rodentia</taxon>
        <taxon>Myomorpha</taxon>
        <taxon>Muroidea</taxon>
        <taxon>Muridae</taxon>
        <taxon>Murinae</taxon>
        <taxon>Mus</taxon>
        <taxon>Mus</taxon>
    </lineage>
</organism>
<reference key="1">
    <citation type="journal article" date="1998" name="Nat. Genet.">
        <title>A gene encoding a novel RFX-associated transactivator is mutated in the majority of MHC class II deficiency patients.</title>
        <authorList>
            <person name="Masternak K."/>
            <person name="Barras E."/>
            <person name="Zufferey M."/>
            <person name="Conrad B."/>
            <person name="Corthals G."/>
            <person name="Aebersold R."/>
            <person name="Sanchez J.-C."/>
            <person name="Hochstrasser D.F."/>
            <person name="Mach B."/>
            <person name="Reith W."/>
        </authorList>
    </citation>
    <scope>NUCLEOTIDE SEQUENCE [MRNA]</scope>
    <source>
        <strain>C57BL/6J</strain>
        <tissue>Spleen</tissue>
    </source>
</reference>
<reference key="2">
    <citation type="journal article" date="1999" name="J. Biol. Chem.">
        <title>The ankyrin repeat-containing adaptor protein tvl-1 is a novel substrate and regulator of raf-1.</title>
        <authorList>
            <person name="Lin J.-H."/>
            <person name="Makris A."/>
            <person name="McMahon C."/>
            <person name="Bear S.E."/>
            <person name="Patriotis C."/>
            <person name="Prasad V.R."/>
            <person name="Brent R."/>
            <person name="Golemis E.A."/>
            <person name="Tsichlis P.N."/>
        </authorList>
    </citation>
    <scope>NUCLEOTIDE SEQUENCE [MRNA]</scope>
    <scope>FUNCTION</scope>
    <scope>SUBCELLULAR LOCATION</scope>
    <scope>INTERACTION WITH RAF1</scope>
    <scope>SUBUNIT</scope>
    <scope>DOMAIN</scope>
    <scope>PHOSPHORYLATION</scope>
    <source>
        <tissue>T-cell</tissue>
    </source>
</reference>
<reference key="3">
    <citation type="journal article" date="2004" name="Genome Res.">
        <title>The status, quality, and expansion of the NIH full-length cDNA project: the Mammalian Gene Collection (MGC).</title>
        <authorList>
            <consortium name="The MGC Project Team"/>
        </authorList>
    </citation>
    <scope>NUCLEOTIDE SEQUENCE [LARGE SCALE MRNA] (ISOFORM SHORT)</scope>
    <source>
        <strain>FVB/N</strain>
        <tissue>Salivary gland</tissue>
    </source>
</reference>
<protein>
    <recommendedName>
        <fullName>DNA-binding protein RFXANK</fullName>
    </recommendedName>
    <alternativeName>
        <fullName>Ankyrin repeat-containing adapter protein Tvl-1</fullName>
    </alternativeName>
    <alternativeName>
        <fullName>Regulatory factor X subunit B</fullName>
        <shortName>RFX-B</shortName>
    </alternativeName>
    <alternativeName>
        <fullName>Regulatory factor X-associated ankyrin-containing protein</fullName>
    </alternativeName>
</protein>